<organism>
    <name type="scientific">Helicobacter pylori (strain J99 / ATCC 700824)</name>
    <name type="common">Campylobacter pylori J99</name>
    <dbReference type="NCBI Taxonomy" id="85963"/>
    <lineage>
        <taxon>Bacteria</taxon>
        <taxon>Pseudomonadati</taxon>
        <taxon>Campylobacterota</taxon>
        <taxon>Epsilonproteobacteria</taxon>
        <taxon>Campylobacterales</taxon>
        <taxon>Helicobacteraceae</taxon>
        <taxon>Helicobacter</taxon>
    </lineage>
</organism>
<dbReference type="EC" id="1.7.1.13" evidence="1"/>
<dbReference type="EMBL" id="AE001439">
    <property type="protein sequence ID" value="AAD06894.1"/>
    <property type="molecule type" value="Genomic_DNA"/>
</dbReference>
<dbReference type="PIR" id="E71822">
    <property type="entry name" value="E71822"/>
</dbReference>
<dbReference type="RefSeq" id="WP_000187329.1">
    <property type="nucleotide sequence ID" value="NC_000921.1"/>
</dbReference>
<dbReference type="SMR" id="Q9ZJJ9"/>
<dbReference type="KEGG" id="hpj:jhp_1308"/>
<dbReference type="PATRIC" id="fig|85963.30.peg.1255"/>
<dbReference type="eggNOG" id="COG0780">
    <property type="taxonomic scope" value="Bacteria"/>
</dbReference>
<dbReference type="UniPathway" id="UPA00392"/>
<dbReference type="Proteomes" id="UP000000804">
    <property type="component" value="Chromosome"/>
</dbReference>
<dbReference type="GO" id="GO:0005737">
    <property type="term" value="C:cytoplasm"/>
    <property type="evidence" value="ECO:0007669"/>
    <property type="project" value="UniProtKB-SubCell"/>
</dbReference>
<dbReference type="GO" id="GO:0033739">
    <property type="term" value="F:preQ1 synthase activity"/>
    <property type="evidence" value="ECO:0007669"/>
    <property type="project" value="UniProtKB-UniRule"/>
</dbReference>
<dbReference type="GO" id="GO:0008616">
    <property type="term" value="P:queuosine biosynthetic process"/>
    <property type="evidence" value="ECO:0007669"/>
    <property type="project" value="UniProtKB-UniRule"/>
</dbReference>
<dbReference type="GO" id="GO:0006400">
    <property type="term" value="P:tRNA modification"/>
    <property type="evidence" value="ECO:0007669"/>
    <property type="project" value="UniProtKB-UniRule"/>
</dbReference>
<dbReference type="Gene3D" id="3.30.1130.10">
    <property type="match status" value="1"/>
</dbReference>
<dbReference type="HAMAP" id="MF_00818">
    <property type="entry name" value="QueF_type1"/>
    <property type="match status" value="1"/>
</dbReference>
<dbReference type="InterPro" id="IPR043133">
    <property type="entry name" value="GTP-CH-I_C/QueF"/>
</dbReference>
<dbReference type="InterPro" id="IPR050084">
    <property type="entry name" value="NADPH_dep_7-cyano-7-deazaG_red"/>
</dbReference>
<dbReference type="InterPro" id="IPR029500">
    <property type="entry name" value="QueF"/>
</dbReference>
<dbReference type="InterPro" id="IPR016856">
    <property type="entry name" value="QueF_type1"/>
</dbReference>
<dbReference type="NCBIfam" id="TIGR03139">
    <property type="entry name" value="QueF-II"/>
    <property type="match status" value="1"/>
</dbReference>
<dbReference type="PANTHER" id="PTHR34354">
    <property type="entry name" value="NADPH-DEPENDENT 7-CYANO-7-DEAZAGUANINE REDUCTASE"/>
    <property type="match status" value="1"/>
</dbReference>
<dbReference type="PANTHER" id="PTHR34354:SF1">
    <property type="entry name" value="NADPH-DEPENDENT 7-CYANO-7-DEAZAGUANINE REDUCTASE"/>
    <property type="match status" value="1"/>
</dbReference>
<dbReference type="Pfam" id="PF14489">
    <property type="entry name" value="QueF"/>
    <property type="match status" value="1"/>
</dbReference>
<dbReference type="PIRSF" id="PIRSF027377">
    <property type="entry name" value="Nitrile_oxidored_QueF"/>
    <property type="match status" value="1"/>
</dbReference>
<dbReference type="SUPFAM" id="SSF55620">
    <property type="entry name" value="Tetrahydrobiopterin biosynthesis enzymes-like"/>
    <property type="match status" value="1"/>
</dbReference>
<comment type="function">
    <text evidence="1">Catalyzes the NADPH-dependent reduction of 7-cyano-7-deazaguanine (preQ0) to 7-aminomethyl-7-deazaguanine (preQ1).</text>
</comment>
<comment type="catalytic activity">
    <reaction evidence="1">
        <text>7-aminomethyl-7-carbaguanine + 2 NADP(+) = 7-cyano-7-deazaguanine + 2 NADPH + 3 H(+)</text>
        <dbReference type="Rhea" id="RHEA:13409"/>
        <dbReference type="ChEBI" id="CHEBI:15378"/>
        <dbReference type="ChEBI" id="CHEBI:45075"/>
        <dbReference type="ChEBI" id="CHEBI:57783"/>
        <dbReference type="ChEBI" id="CHEBI:58349"/>
        <dbReference type="ChEBI" id="CHEBI:58703"/>
        <dbReference type="EC" id="1.7.1.13"/>
    </reaction>
</comment>
<comment type="pathway">
    <text evidence="1">tRNA modification; tRNA-queuosine biosynthesis.</text>
</comment>
<comment type="subcellular location">
    <subcellularLocation>
        <location evidence="1">Cytoplasm</location>
    </subcellularLocation>
</comment>
<comment type="similarity">
    <text evidence="1">Belongs to the GTP cyclohydrolase I family. QueF type 1 subfamily.</text>
</comment>
<keyword id="KW-0963">Cytoplasm</keyword>
<keyword id="KW-0521">NADP</keyword>
<keyword id="KW-0560">Oxidoreductase</keyword>
<keyword id="KW-0671">Queuosine biosynthesis</keyword>
<sequence length="148" mass="17054">MTPESNLKSLGAKTPYIFEYNSDLLEAFPNPNPNLDPLITLECKEFTSLCPITSQPDFGVIFIRYIPKDKMVESKSLKLYLFSYRNHGSFHESCINTILLDLVQLLEPKYLEVYGDFVSRGGIAIKPFVNYAIKEYQDFKEKRLLDAK</sequence>
<evidence type="ECO:0000255" key="1">
    <source>
        <dbReference type="HAMAP-Rule" id="MF_00818"/>
    </source>
</evidence>
<protein>
    <recommendedName>
        <fullName evidence="1">NADPH-dependent 7-cyano-7-deazaguanine reductase</fullName>
        <ecNumber evidence="1">1.7.1.13</ecNumber>
    </recommendedName>
    <alternativeName>
        <fullName evidence="1">7-cyano-7-carbaguanine reductase</fullName>
    </alternativeName>
    <alternativeName>
        <fullName evidence="1">NADPH-dependent nitrile oxidoreductase</fullName>
    </alternativeName>
    <alternativeName>
        <fullName evidence="1">PreQ(0) reductase</fullName>
    </alternativeName>
</protein>
<gene>
    <name evidence="1" type="primary">queF</name>
    <name type="ordered locus">jhp_1308</name>
</gene>
<reference key="1">
    <citation type="journal article" date="1999" name="Nature">
        <title>Genomic sequence comparison of two unrelated isolates of the human gastric pathogen Helicobacter pylori.</title>
        <authorList>
            <person name="Alm R.A."/>
            <person name="Ling L.-S.L."/>
            <person name="Moir D.T."/>
            <person name="King B.L."/>
            <person name="Brown E.D."/>
            <person name="Doig P.C."/>
            <person name="Smith D.R."/>
            <person name="Noonan B."/>
            <person name="Guild B.C."/>
            <person name="deJonge B.L."/>
            <person name="Carmel G."/>
            <person name="Tummino P.J."/>
            <person name="Caruso A."/>
            <person name="Uria-Nickelsen M."/>
            <person name="Mills D.M."/>
            <person name="Ives C."/>
            <person name="Gibson R."/>
            <person name="Merberg D."/>
            <person name="Mills S.D."/>
            <person name="Jiang Q."/>
            <person name="Taylor D.E."/>
            <person name="Vovis G.F."/>
            <person name="Trust T.J."/>
        </authorList>
    </citation>
    <scope>NUCLEOTIDE SEQUENCE [LARGE SCALE GENOMIC DNA]</scope>
    <source>
        <strain>J99 / ATCC 700824</strain>
    </source>
</reference>
<feature type="chain" id="PRO_0000162976" description="NADPH-dependent 7-cyano-7-deazaguanine reductase">
    <location>
        <begin position="1"/>
        <end position="148"/>
    </location>
</feature>
<feature type="active site" description="Thioimide intermediate" evidence="1">
    <location>
        <position position="50"/>
    </location>
</feature>
<feature type="active site" description="Proton donor" evidence="1">
    <location>
        <position position="57"/>
    </location>
</feature>
<feature type="binding site" evidence="1">
    <location>
        <begin position="72"/>
        <end position="74"/>
    </location>
    <ligand>
        <name>substrate</name>
    </ligand>
</feature>
<feature type="binding site" evidence="1">
    <location>
        <begin position="91"/>
        <end position="92"/>
    </location>
    <ligand>
        <name>substrate</name>
    </ligand>
</feature>
<accession>Q9ZJJ9</accession>
<proteinExistence type="inferred from homology"/>
<name>QUEF_HELPJ</name>